<evidence type="ECO:0000255" key="1">
    <source>
        <dbReference type="HAMAP-Rule" id="MF_00315"/>
    </source>
</evidence>
<keyword id="KW-0414">Isoprene biosynthesis</keyword>
<keyword id="KW-0460">Magnesium</keyword>
<keyword id="KW-0479">Metal-binding</keyword>
<keyword id="KW-1185">Reference proteome</keyword>
<keyword id="KW-0784">Thiamine biosynthesis</keyword>
<keyword id="KW-0786">Thiamine pyrophosphate</keyword>
<keyword id="KW-0808">Transferase</keyword>
<comment type="function">
    <text evidence="1">Catalyzes the acyloin condensation reaction between C atoms 2 and 3 of pyruvate and glyceraldehyde 3-phosphate to yield 1-deoxy-D-xylulose-5-phosphate (DXP).</text>
</comment>
<comment type="catalytic activity">
    <reaction evidence="1">
        <text>D-glyceraldehyde 3-phosphate + pyruvate + H(+) = 1-deoxy-D-xylulose 5-phosphate + CO2</text>
        <dbReference type="Rhea" id="RHEA:12605"/>
        <dbReference type="ChEBI" id="CHEBI:15361"/>
        <dbReference type="ChEBI" id="CHEBI:15378"/>
        <dbReference type="ChEBI" id="CHEBI:16526"/>
        <dbReference type="ChEBI" id="CHEBI:57792"/>
        <dbReference type="ChEBI" id="CHEBI:59776"/>
        <dbReference type="EC" id="2.2.1.7"/>
    </reaction>
</comment>
<comment type="cofactor">
    <cofactor evidence="1">
        <name>Mg(2+)</name>
        <dbReference type="ChEBI" id="CHEBI:18420"/>
    </cofactor>
    <text evidence="1">Binds 1 Mg(2+) ion per subunit.</text>
</comment>
<comment type="cofactor">
    <cofactor evidence="1">
        <name>thiamine diphosphate</name>
        <dbReference type="ChEBI" id="CHEBI:58937"/>
    </cofactor>
    <text evidence="1">Binds 1 thiamine pyrophosphate per subunit.</text>
</comment>
<comment type="pathway">
    <text evidence="1">Metabolic intermediate biosynthesis; 1-deoxy-D-xylulose 5-phosphate biosynthesis; 1-deoxy-D-xylulose 5-phosphate from D-glyceraldehyde 3-phosphate and pyruvate: step 1/1.</text>
</comment>
<comment type="subunit">
    <text evidence="1">Homodimer.</text>
</comment>
<comment type="similarity">
    <text evidence="1">Belongs to the transketolase family. DXPS subfamily.</text>
</comment>
<accession>Q5NN52</accession>
<protein>
    <recommendedName>
        <fullName evidence="1">1-deoxy-D-xylulose-5-phosphate synthase 1</fullName>
        <ecNumber evidence="1">2.2.1.7</ecNumber>
    </recommendedName>
    <alternativeName>
        <fullName evidence="1">1-deoxyxylulose-5-phosphate synthase 1</fullName>
        <shortName evidence="1">DXP synthase 1</shortName>
        <shortName evidence="1">DXPS 1</shortName>
    </alternativeName>
</protein>
<sequence length="649" mass="70307">MFPNDKTPLLDKIKTPAELRQLDRNSLRQLADELRKETISAVGVTGGHLGSGLGVIELTVALHYVFNTPKDALVWDVGHQTYPHKILTGRRDRIRTLRQRDGLSGFTQRAESEYDAFGAAHSSTSISAALGFAMASKLSDSDDKAVAIIGDGSMTAGMAYEAMNNAKAAGKRLIVILNDNEMSISPPVGALSSYLSRLISSRPFMNLRDIMRGVVNRMPKGLATAARKADEYARGMATGGTFFEELGFYYVGPVDGHNLDQLIPVLENVRDAKDGPILVHVVTRKGQGYAPAEAAKDKYHAVQRLDVVSGKQAKAPPGPPSYTSVFSEQLIKEAKQDDKIVTITAAMPTGTGLDRFQQYFPERMFDVGIAEQHAVTFAAGLAAAGYKPFCCLYSTFLQRGYDQLVHDVAIQNLPVRFAVDRAGLVGADGATHAGSFDLAFMVNLPNMVVMAPSDERELANMVHSMAHYDQGPISVRYPRGNGVGVSLEGEKEILPIGKGRLIRRGKKVAILSLGTRLEESLKAADRLDAQGLSTSVADMRFAKPLDEALTRQLLKSHQVIITIEEGALGGFATQVLTMASDEGLMDDGLKIRTLRLPDRFQPQDKQERQYAEAGLDADGIVAAVISALHRNSKPVEVVEMANMGSIARA</sequence>
<name>DXS1_ZYMMO</name>
<dbReference type="EC" id="2.2.1.7" evidence="1"/>
<dbReference type="EMBL" id="AE008692">
    <property type="protein sequence ID" value="AAV89858.1"/>
    <property type="molecule type" value="Genomic_DNA"/>
</dbReference>
<dbReference type="RefSeq" id="WP_011241050.1">
    <property type="nucleotide sequence ID" value="NC_006526.2"/>
</dbReference>
<dbReference type="SMR" id="Q5NN52"/>
<dbReference type="STRING" id="264203.ZMO1234"/>
<dbReference type="GeneID" id="79903641"/>
<dbReference type="KEGG" id="zmo:ZMO1234"/>
<dbReference type="eggNOG" id="COG1154">
    <property type="taxonomic scope" value="Bacteria"/>
</dbReference>
<dbReference type="HOGENOM" id="CLU_009227_1_4_5"/>
<dbReference type="UniPathway" id="UPA00064">
    <property type="reaction ID" value="UER00091"/>
</dbReference>
<dbReference type="Proteomes" id="UP000001173">
    <property type="component" value="Chromosome"/>
</dbReference>
<dbReference type="GO" id="GO:0008661">
    <property type="term" value="F:1-deoxy-D-xylulose-5-phosphate synthase activity"/>
    <property type="evidence" value="ECO:0007669"/>
    <property type="project" value="UniProtKB-UniRule"/>
</dbReference>
<dbReference type="GO" id="GO:0000287">
    <property type="term" value="F:magnesium ion binding"/>
    <property type="evidence" value="ECO:0007669"/>
    <property type="project" value="UniProtKB-UniRule"/>
</dbReference>
<dbReference type="GO" id="GO:0030976">
    <property type="term" value="F:thiamine pyrophosphate binding"/>
    <property type="evidence" value="ECO:0007669"/>
    <property type="project" value="UniProtKB-UniRule"/>
</dbReference>
<dbReference type="GO" id="GO:0052865">
    <property type="term" value="P:1-deoxy-D-xylulose 5-phosphate biosynthetic process"/>
    <property type="evidence" value="ECO:0007669"/>
    <property type="project" value="UniProtKB-UniPathway"/>
</dbReference>
<dbReference type="GO" id="GO:0019682">
    <property type="term" value="P:glyceraldehyde-3-phosphate metabolic process"/>
    <property type="evidence" value="ECO:0007669"/>
    <property type="project" value="UniProtKB-ARBA"/>
</dbReference>
<dbReference type="GO" id="GO:0016114">
    <property type="term" value="P:terpenoid biosynthetic process"/>
    <property type="evidence" value="ECO:0007669"/>
    <property type="project" value="UniProtKB-UniRule"/>
</dbReference>
<dbReference type="GO" id="GO:0009228">
    <property type="term" value="P:thiamine biosynthetic process"/>
    <property type="evidence" value="ECO:0007669"/>
    <property type="project" value="UniProtKB-UniRule"/>
</dbReference>
<dbReference type="CDD" id="cd02007">
    <property type="entry name" value="TPP_DXS"/>
    <property type="match status" value="1"/>
</dbReference>
<dbReference type="CDD" id="cd07033">
    <property type="entry name" value="TPP_PYR_DXS_TK_like"/>
    <property type="match status" value="1"/>
</dbReference>
<dbReference type="FunFam" id="3.40.50.920:FF:000002">
    <property type="entry name" value="1-deoxy-D-xylulose-5-phosphate synthase"/>
    <property type="match status" value="1"/>
</dbReference>
<dbReference type="FunFam" id="3.40.50.970:FF:000005">
    <property type="entry name" value="1-deoxy-D-xylulose-5-phosphate synthase"/>
    <property type="match status" value="1"/>
</dbReference>
<dbReference type="Gene3D" id="3.40.50.920">
    <property type="match status" value="1"/>
</dbReference>
<dbReference type="Gene3D" id="3.40.50.970">
    <property type="match status" value="2"/>
</dbReference>
<dbReference type="HAMAP" id="MF_00315">
    <property type="entry name" value="DXP_synth"/>
    <property type="match status" value="1"/>
</dbReference>
<dbReference type="InterPro" id="IPR005477">
    <property type="entry name" value="Dxylulose-5-P_synthase"/>
</dbReference>
<dbReference type="InterPro" id="IPR029061">
    <property type="entry name" value="THDP-binding"/>
</dbReference>
<dbReference type="InterPro" id="IPR009014">
    <property type="entry name" value="Transketo_C/PFOR_II"/>
</dbReference>
<dbReference type="InterPro" id="IPR005475">
    <property type="entry name" value="Transketolase-like_Pyr-bd"/>
</dbReference>
<dbReference type="InterPro" id="IPR033248">
    <property type="entry name" value="Transketolase_C"/>
</dbReference>
<dbReference type="InterPro" id="IPR049557">
    <property type="entry name" value="Transketolase_CS"/>
</dbReference>
<dbReference type="NCBIfam" id="TIGR00204">
    <property type="entry name" value="dxs"/>
    <property type="match status" value="1"/>
</dbReference>
<dbReference type="NCBIfam" id="NF003933">
    <property type="entry name" value="PRK05444.2-2"/>
    <property type="match status" value="1"/>
</dbReference>
<dbReference type="PANTHER" id="PTHR43322">
    <property type="entry name" value="1-D-DEOXYXYLULOSE 5-PHOSPHATE SYNTHASE-RELATED"/>
    <property type="match status" value="1"/>
</dbReference>
<dbReference type="PANTHER" id="PTHR43322:SF5">
    <property type="entry name" value="1-DEOXY-D-XYLULOSE-5-PHOSPHATE SYNTHASE, CHLOROPLASTIC"/>
    <property type="match status" value="1"/>
</dbReference>
<dbReference type="Pfam" id="PF13292">
    <property type="entry name" value="DXP_synthase_N"/>
    <property type="match status" value="1"/>
</dbReference>
<dbReference type="Pfam" id="PF02779">
    <property type="entry name" value="Transket_pyr"/>
    <property type="match status" value="1"/>
</dbReference>
<dbReference type="Pfam" id="PF02780">
    <property type="entry name" value="Transketolase_C"/>
    <property type="match status" value="1"/>
</dbReference>
<dbReference type="SMART" id="SM00861">
    <property type="entry name" value="Transket_pyr"/>
    <property type="match status" value="1"/>
</dbReference>
<dbReference type="SUPFAM" id="SSF52518">
    <property type="entry name" value="Thiamin diphosphate-binding fold (THDP-binding)"/>
    <property type="match status" value="2"/>
</dbReference>
<dbReference type="SUPFAM" id="SSF52922">
    <property type="entry name" value="TK C-terminal domain-like"/>
    <property type="match status" value="1"/>
</dbReference>
<dbReference type="PROSITE" id="PS00801">
    <property type="entry name" value="TRANSKETOLASE_1"/>
    <property type="match status" value="1"/>
</dbReference>
<gene>
    <name evidence="1" type="primary">dxs1</name>
    <name type="ordered locus">ZMO1234</name>
</gene>
<proteinExistence type="inferred from homology"/>
<reference key="1">
    <citation type="journal article" date="2005" name="Nat. Biotechnol.">
        <title>The genome sequence of the ethanologenic bacterium Zymomonas mobilis ZM4.</title>
        <authorList>
            <person name="Seo J.-S."/>
            <person name="Chong H."/>
            <person name="Park H.S."/>
            <person name="Yoon K.-O."/>
            <person name="Jung C."/>
            <person name="Kim J.J."/>
            <person name="Hong J.H."/>
            <person name="Kim H."/>
            <person name="Kim J.-H."/>
            <person name="Kil J.-I."/>
            <person name="Park C.J."/>
            <person name="Oh H.-M."/>
            <person name="Lee J.-S."/>
            <person name="Jin S.-J."/>
            <person name="Um H.-W."/>
            <person name="Lee H.-J."/>
            <person name="Oh S.-J."/>
            <person name="Kim J.Y."/>
            <person name="Kang H.L."/>
            <person name="Lee S.Y."/>
            <person name="Lee K.J."/>
            <person name="Kang H.S."/>
        </authorList>
    </citation>
    <scope>NUCLEOTIDE SEQUENCE [LARGE SCALE GENOMIC DNA]</scope>
    <source>
        <strain>ATCC 31821 / ZM4 / CP4</strain>
    </source>
</reference>
<feature type="chain" id="PRO_0000256510" description="1-deoxy-D-xylulose-5-phosphate synthase 1">
    <location>
        <begin position="1"/>
        <end position="649"/>
    </location>
</feature>
<feature type="binding site" evidence="1">
    <location>
        <position position="79"/>
    </location>
    <ligand>
        <name>thiamine diphosphate</name>
        <dbReference type="ChEBI" id="CHEBI:58937"/>
    </ligand>
</feature>
<feature type="binding site" evidence="1">
    <location>
        <begin position="120"/>
        <end position="122"/>
    </location>
    <ligand>
        <name>thiamine diphosphate</name>
        <dbReference type="ChEBI" id="CHEBI:58937"/>
    </ligand>
</feature>
<feature type="binding site" evidence="1">
    <location>
        <position position="151"/>
    </location>
    <ligand>
        <name>Mg(2+)</name>
        <dbReference type="ChEBI" id="CHEBI:18420"/>
    </ligand>
</feature>
<feature type="binding site" evidence="1">
    <location>
        <begin position="152"/>
        <end position="153"/>
    </location>
    <ligand>
        <name>thiamine diphosphate</name>
        <dbReference type="ChEBI" id="CHEBI:58937"/>
    </ligand>
</feature>
<feature type="binding site" evidence="1">
    <location>
        <position position="180"/>
    </location>
    <ligand>
        <name>Mg(2+)</name>
        <dbReference type="ChEBI" id="CHEBI:18420"/>
    </ligand>
</feature>
<feature type="binding site" evidence="1">
    <location>
        <position position="180"/>
    </location>
    <ligand>
        <name>thiamine diphosphate</name>
        <dbReference type="ChEBI" id="CHEBI:58937"/>
    </ligand>
</feature>
<feature type="binding site" evidence="1">
    <location>
        <position position="289"/>
    </location>
    <ligand>
        <name>thiamine diphosphate</name>
        <dbReference type="ChEBI" id="CHEBI:58937"/>
    </ligand>
</feature>
<feature type="binding site" evidence="1">
    <location>
        <position position="371"/>
    </location>
    <ligand>
        <name>thiamine diphosphate</name>
        <dbReference type="ChEBI" id="CHEBI:58937"/>
    </ligand>
</feature>
<organism>
    <name type="scientific">Zymomonas mobilis subsp. mobilis (strain ATCC 31821 / ZM4 / CP4)</name>
    <dbReference type="NCBI Taxonomy" id="264203"/>
    <lineage>
        <taxon>Bacteria</taxon>
        <taxon>Pseudomonadati</taxon>
        <taxon>Pseudomonadota</taxon>
        <taxon>Alphaproteobacteria</taxon>
        <taxon>Sphingomonadales</taxon>
        <taxon>Zymomonadaceae</taxon>
        <taxon>Zymomonas</taxon>
    </lineage>
</organism>